<accession>C3K2X7</accession>
<proteinExistence type="inferred from homology"/>
<dbReference type="EMBL" id="AM181176">
    <property type="protein sequence ID" value="CAY52768.1"/>
    <property type="molecule type" value="Genomic_DNA"/>
</dbReference>
<dbReference type="RefSeq" id="WP_003186070.1">
    <property type="nucleotide sequence ID" value="NC_012660.1"/>
</dbReference>
<dbReference type="SMR" id="C3K2X7"/>
<dbReference type="STRING" id="294.SRM1_05180"/>
<dbReference type="GeneID" id="98636782"/>
<dbReference type="eggNOG" id="COG0051">
    <property type="taxonomic scope" value="Bacteria"/>
</dbReference>
<dbReference type="HOGENOM" id="CLU_122625_1_3_6"/>
<dbReference type="OrthoDB" id="9804464at2"/>
<dbReference type="GO" id="GO:1990904">
    <property type="term" value="C:ribonucleoprotein complex"/>
    <property type="evidence" value="ECO:0007669"/>
    <property type="project" value="UniProtKB-KW"/>
</dbReference>
<dbReference type="GO" id="GO:0005840">
    <property type="term" value="C:ribosome"/>
    <property type="evidence" value="ECO:0007669"/>
    <property type="project" value="UniProtKB-KW"/>
</dbReference>
<dbReference type="GO" id="GO:0003735">
    <property type="term" value="F:structural constituent of ribosome"/>
    <property type="evidence" value="ECO:0007669"/>
    <property type="project" value="InterPro"/>
</dbReference>
<dbReference type="GO" id="GO:0000049">
    <property type="term" value="F:tRNA binding"/>
    <property type="evidence" value="ECO:0007669"/>
    <property type="project" value="UniProtKB-UniRule"/>
</dbReference>
<dbReference type="GO" id="GO:0006412">
    <property type="term" value="P:translation"/>
    <property type="evidence" value="ECO:0007669"/>
    <property type="project" value="UniProtKB-UniRule"/>
</dbReference>
<dbReference type="FunFam" id="3.30.70.600:FF:000001">
    <property type="entry name" value="30S ribosomal protein S10"/>
    <property type="match status" value="1"/>
</dbReference>
<dbReference type="Gene3D" id="3.30.70.600">
    <property type="entry name" value="Ribosomal protein S10 domain"/>
    <property type="match status" value="1"/>
</dbReference>
<dbReference type="HAMAP" id="MF_00508">
    <property type="entry name" value="Ribosomal_uS10"/>
    <property type="match status" value="1"/>
</dbReference>
<dbReference type="InterPro" id="IPR001848">
    <property type="entry name" value="Ribosomal_uS10"/>
</dbReference>
<dbReference type="InterPro" id="IPR018268">
    <property type="entry name" value="Ribosomal_uS10_CS"/>
</dbReference>
<dbReference type="InterPro" id="IPR027486">
    <property type="entry name" value="Ribosomal_uS10_dom"/>
</dbReference>
<dbReference type="InterPro" id="IPR036838">
    <property type="entry name" value="Ribosomal_uS10_dom_sf"/>
</dbReference>
<dbReference type="NCBIfam" id="NF001861">
    <property type="entry name" value="PRK00596.1"/>
    <property type="match status" value="1"/>
</dbReference>
<dbReference type="NCBIfam" id="TIGR01049">
    <property type="entry name" value="rpsJ_bact"/>
    <property type="match status" value="1"/>
</dbReference>
<dbReference type="PANTHER" id="PTHR11700">
    <property type="entry name" value="30S RIBOSOMAL PROTEIN S10 FAMILY MEMBER"/>
    <property type="match status" value="1"/>
</dbReference>
<dbReference type="Pfam" id="PF00338">
    <property type="entry name" value="Ribosomal_S10"/>
    <property type="match status" value="1"/>
</dbReference>
<dbReference type="PRINTS" id="PR00971">
    <property type="entry name" value="RIBOSOMALS10"/>
</dbReference>
<dbReference type="SMART" id="SM01403">
    <property type="entry name" value="Ribosomal_S10"/>
    <property type="match status" value="1"/>
</dbReference>
<dbReference type="SUPFAM" id="SSF54999">
    <property type="entry name" value="Ribosomal protein S10"/>
    <property type="match status" value="1"/>
</dbReference>
<dbReference type="PROSITE" id="PS00361">
    <property type="entry name" value="RIBOSOMAL_S10"/>
    <property type="match status" value="1"/>
</dbReference>
<feature type="chain" id="PRO_1000206593" description="Small ribosomal subunit protein uS10">
    <location>
        <begin position="1"/>
        <end position="103"/>
    </location>
</feature>
<sequence>MQNQQIRIRLKAFDHRLIDQSTQEIVETAKRTGAQVRGPIPLPTRKERFTVLVSPHVNKDARDQYEIRTHKRVLDIVQPTDKTVDALMKLDLAAGVEVQISLG</sequence>
<name>RS10_PSEFS</name>
<reference key="1">
    <citation type="journal article" date="2009" name="Genome Biol.">
        <title>Genomic and genetic analyses of diversity and plant interactions of Pseudomonas fluorescens.</title>
        <authorList>
            <person name="Silby M.W."/>
            <person name="Cerdeno-Tarraga A.M."/>
            <person name="Vernikos G.S."/>
            <person name="Giddens S.R."/>
            <person name="Jackson R.W."/>
            <person name="Preston G.M."/>
            <person name="Zhang X.-X."/>
            <person name="Moon C.D."/>
            <person name="Gehrig S.M."/>
            <person name="Godfrey S.A.C."/>
            <person name="Knight C.G."/>
            <person name="Malone J.G."/>
            <person name="Robinson Z."/>
            <person name="Spiers A.J."/>
            <person name="Harris S."/>
            <person name="Challis G.L."/>
            <person name="Yaxley A.M."/>
            <person name="Harris D."/>
            <person name="Seeger K."/>
            <person name="Murphy L."/>
            <person name="Rutter S."/>
            <person name="Squares R."/>
            <person name="Quail M.A."/>
            <person name="Saunders E."/>
            <person name="Mavromatis K."/>
            <person name="Brettin T.S."/>
            <person name="Bentley S.D."/>
            <person name="Hothersall J."/>
            <person name="Stephens E."/>
            <person name="Thomas C.M."/>
            <person name="Parkhill J."/>
            <person name="Levy S.B."/>
            <person name="Rainey P.B."/>
            <person name="Thomson N.R."/>
        </authorList>
    </citation>
    <scope>NUCLEOTIDE SEQUENCE [LARGE SCALE GENOMIC DNA]</scope>
    <source>
        <strain>SBW25</strain>
    </source>
</reference>
<protein>
    <recommendedName>
        <fullName evidence="1">Small ribosomal subunit protein uS10</fullName>
    </recommendedName>
    <alternativeName>
        <fullName evidence="2">30S ribosomal protein S10</fullName>
    </alternativeName>
</protein>
<gene>
    <name evidence="1" type="primary">rpsJ</name>
    <name type="ordered locus">PFLU_5528</name>
</gene>
<comment type="function">
    <text evidence="1">Involved in the binding of tRNA to the ribosomes.</text>
</comment>
<comment type="subunit">
    <text evidence="1">Part of the 30S ribosomal subunit.</text>
</comment>
<comment type="similarity">
    <text evidence="1">Belongs to the universal ribosomal protein uS10 family.</text>
</comment>
<keyword id="KW-0687">Ribonucleoprotein</keyword>
<keyword id="KW-0689">Ribosomal protein</keyword>
<evidence type="ECO:0000255" key="1">
    <source>
        <dbReference type="HAMAP-Rule" id="MF_00508"/>
    </source>
</evidence>
<evidence type="ECO:0000305" key="2"/>
<organism>
    <name type="scientific">Pseudomonas fluorescens (strain SBW25)</name>
    <dbReference type="NCBI Taxonomy" id="216595"/>
    <lineage>
        <taxon>Bacteria</taxon>
        <taxon>Pseudomonadati</taxon>
        <taxon>Pseudomonadota</taxon>
        <taxon>Gammaproteobacteria</taxon>
        <taxon>Pseudomonadales</taxon>
        <taxon>Pseudomonadaceae</taxon>
        <taxon>Pseudomonas</taxon>
    </lineage>
</organism>